<reference key="1">
    <citation type="submission" date="2007-10" db="EMBL/GenBank/DDBJ databases">
        <title>Complete genome of Alkaliphilus oremlandii OhILAs.</title>
        <authorList>
            <person name="Copeland A."/>
            <person name="Lucas S."/>
            <person name="Lapidus A."/>
            <person name="Barry K."/>
            <person name="Detter J.C."/>
            <person name="Glavina del Rio T."/>
            <person name="Hammon N."/>
            <person name="Israni S."/>
            <person name="Dalin E."/>
            <person name="Tice H."/>
            <person name="Pitluck S."/>
            <person name="Chain P."/>
            <person name="Malfatti S."/>
            <person name="Shin M."/>
            <person name="Vergez L."/>
            <person name="Schmutz J."/>
            <person name="Larimer F."/>
            <person name="Land M."/>
            <person name="Hauser L."/>
            <person name="Kyrpides N."/>
            <person name="Mikhailova N."/>
            <person name="Stolz J.F."/>
            <person name="Dawson A."/>
            <person name="Fisher E."/>
            <person name="Crable B."/>
            <person name="Perera E."/>
            <person name="Lisak J."/>
            <person name="Ranganathan M."/>
            <person name="Basu P."/>
            <person name="Richardson P."/>
        </authorList>
    </citation>
    <scope>NUCLEOTIDE SEQUENCE [LARGE SCALE GENOMIC DNA]</scope>
    <source>
        <strain>OhILAs</strain>
    </source>
</reference>
<accession>A8MH28</accession>
<name>RSMH_ALKOO</name>
<sequence length="311" mass="34983">MDFKHVSVLLEECIENLNIKENGIYVDGTLGGAGHSSEIAKRLSDKGLLIGIDQDENAIKAAGEKLTPMKERIKLVRDNFSNIDAILQNLEIDGIDGILLDLGVSSHQLDEADRGFSYMHDAPLDMRMDTRQAVSAMEVVNSYTEKDLENIIKNYGEEKWAKRIANFIVDFRKEEPITTTHQLVDVIKRAIPKGARIDGPHPAKRTFQAIRIEVNGELEIINKTIDDAVRNLNPGGRICIITFHSLEDRIVKNAFRDLSNPCICPPEFPICRCDRKPAVKIITRKPIVPTEEELELNPRARSAKLRVAEKI</sequence>
<dbReference type="EC" id="2.1.1.199" evidence="1"/>
<dbReference type="EMBL" id="CP000853">
    <property type="protein sequence ID" value="ABW18915.1"/>
    <property type="molecule type" value="Genomic_DNA"/>
</dbReference>
<dbReference type="RefSeq" id="WP_012159227.1">
    <property type="nucleotide sequence ID" value="NC_009922.1"/>
</dbReference>
<dbReference type="SMR" id="A8MH28"/>
<dbReference type="STRING" id="350688.Clos_1371"/>
<dbReference type="KEGG" id="aoe:Clos_1371"/>
<dbReference type="eggNOG" id="COG0275">
    <property type="taxonomic scope" value="Bacteria"/>
</dbReference>
<dbReference type="HOGENOM" id="CLU_038422_2_0_9"/>
<dbReference type="OrthoDB" id="9806637at2"/>
<dbReference type="Proteomes" id="UP000000269">
    <property type="component" value="Chromosome"/>
</dbReference>
<dbReference type="GO" id="GO:0005737">
    <property type="term" value="C:cytoplasm"/>
    <property type="evidence" value="ECO:0007669"/>
    <property type="project" value="UniProtKB-SubCell"/>
</dbReference>
<dbReference type="GO" id="GO:0071424">
    <property type="term" value="F:rRNA (cytosine-N4-)-methyltransferase activity"/>
    <property type="evidence" value="ECO:0007669"/>
    <property type="project" value="UniProtKB-UniRule"/>
</dbReference>
<dbReference type="GO" id="GO:0070475">
    <property type="term" value="P:rRNA base methylation"/>
    <property type="evidence" value="ECO:0007669"/>
    <property type="project" value="UniProtKB-UniRule"/>
</dbReference>
<dbReference type="FunFam" id="1.10.150.170:FF:000001">
    <property type="entry name" value="Ribosomal RNA small subunit methyltransferase H"/>
    <property type="match status" value="1"/>
</dbReference>
<dbReference type="Gene3D" id="1.10.150.170">
    <property type="entry name" value="Putative methyltransferase TM0872, insert domain"/>
    <property type="match status" value="1"/>
</dbReference>
<dbReference type="Gene3D" id="3.40.50.150">
    <property type="entry name" value="Vaccinia Virus protein VP39"/>
    <property type="match status" value="1"/>
</dbReference>
<dbReference type="HAMAP" id="MF_01007">
    <property type="entry name" value="16SrRNA_methyltr_H"/>
    <property type="match status" value="1"/>
</dbReference>
<dbReference type="InterPro" id="IPR002903">
    <property type="entry name" value="RsmH"/>
</dbReference>
<dbReference type="InterPro" id="IPR023397">
    <property type="entry name" value="SAM-dep_MeTrfase_MraW_recog"/>
</dbReference>
<dbReference type="InterPro" id="IPR029063">
    <property type="entry name" value="SAM-dependent_MTases_sf"/>
</dbReference>
<dbReference type="NCBIfam" id="TIGR00006">
    <property type="entry name" value="16S rRNA (cytosine(1402)-N(4))-methyltransferase RsmH"/>
    <property type="match status" value="1"/>
</dbReference>
<dbReference type="PANTHER" id="PTHR11265:SF0">
    <property type="entry name" value="12S RRNA N4-METHYLCYTIDINE METHYLTRANSFERASE"/>
    <property type="match status" value="1"/>
</dbReference>
<dbReference type="PANTHER" id="PTHR11265">
    <property type="entry name" value="S-ADENOSYL-METHYLTRANSFERASE MRAW"/>
    <property type="match status" value="1"/>
</dbReference>
<dbReference type="Pfam" id="PF01795">
    <property type="entry name" value="Methyltransf_5"/>
    <property type="match status" value="1"/>
</dbReference>
<dbReference type="PIRSF" id="PIRSF004486">
    <property type="entry name" value="MraW"/>
    <property type="match status" value="1"/>
</dbReference>
<dbReference type="SUPFAM" id="SSF81799">
    <property type="entry name" value="Putative methyltransferase TM0872, insert domain"/>
    <property type="match status" value="1"/>
</dbReference>
<dbReference type="SUPFAM" id="SSF53335">
    <property type="entry name" value="S-adenosyl-L-methionine-dependent methyltransferases"/>
    <property type="match status" value="1"/>
</dbReference>
<gene>
    <name evidence="1" type="primary">rsmH</name>
    <name type="synonym">mraW</name>
    <name type="ordered locus">Clos_1371</name>
</gene>
<keyword id="KW-0963">Cytoplasm</keyword>
<keyword id="KW-0489">Methyltransferase</keyword>
<keyword id="KW-1185">Reference proteome</keyword>
<keyword id="KW-0698">rRNA processing</keyword>
<keyword id="KW-0949">S-adenosyl-L-methionine</keyword>
<keyword id="KW-0808">Transferase</keyword>
<comment type="function">
    <text evidence="1">Specifically methylates the N4 position of cytidine in position 1402 (C1402) of 16S rRNA.</text>
</comment>
<comment type="catalytic activity">
    <reaction evidence="1">
        <text>cytidine(1402) in 16S rRNA + S-adenosyl-L-methionine = N(4)-methylcytidine(1402) in 16S rRNA + S-adenosyl-L-homocysteine + H(+)</text>
        <dbReference type="Rhea" id="RHEA:42928"/>
        <dbReference type="Rhea" id="RHEA-COMP:10286"/>
        <dbReference type="Rhea" id="RHEA-COMP:10287"/>
        <dbReference type="ChEBI" id="CHEBI:15378"/>
        <dbReference type="ChEBI" id="CHEBI:57856"/>
        <dbReference type="ChEBI" id="CHEBI:59789"/>
        <dbReference type="ChEBI" id="CHEBI:74506"/>
        <dbReference type="ChEBI" id="CHEBI:82748"/>
        <dbReference type="EC" id="2.1.1.199"/>
    </reaction>
</comment>
<comment type="subcellular location">
    <subcellularLocation>
        <location evidence="1">Cytoplasm</location>
    </subcellularLocation>
</comment>
<comment type="similarity">
    <text evidence="1">Belongs to the methyltransferase superfamily. RsmH family.</text>
</comment>
<evidence type="ECO:0000255" key="1">
    <source>
        <dbReference type="HAMAP-Rule" id="MF_01007"/>
    </source>
</evidence>
<organism>
    <name type="scientific">Alkaliphilus oremlandii (strain OhILAs)</name>
    <name type="common">Clostridium oremlandii (strain OhILAs)</name>
    <dbReference type="NCBI Taxonomy" id="350688"/>
    <lineage>
        <taxon>Bacteria</taxon>
        <taxon>Bacillati</taxon>
        <taxon>Bacillota</taxon>
        <taxon>Clostridia</taxon>
        <taxon>Peptostreptococcales</taxon>
        <taxon>Natronincolaceae</taxon>
        <taxon>Alkaliphilus</taxon>
    </lineage>
</organism>
<proteinExistence type="inferred from homology"/>
<protein>
    <recommendedName>
        <fullName evidence="1">Ribosomal RNA small subunit methyltransferase H</fullName>
        <ecNumber evidence="1">2.1.1.199</ecNumber>
    </recommendedName>
    <alternativeName>
        <fullName evidence="1">16S rRNA m(4)C1402 methyltransferase</fullName>
    </alternativeName>
    <alternativeName>
        <fullName evidence="1">rRNA (cytosine-N(4)-)-methyltransferase RsmH</fullName>
    </alternativeName>
</protein>
<feature type="chain" id="PRO_0000386708" description="Ribosomal RNA small subunit methyltransferase H">
    <location>
        <begin position="1"/>
        <end position="311"/>
    </location>
</feature>
<feature type="binding site" evidence="1">
    <location>
        <begin position="33"/>
        <end position="35"/>
    </location>
    <ligand>
        <name>S-adenosyl-L-methionine</name>
        <dbReference type="ChEBI" id="CHEBI:59789"/>
    </ligand>
</feature>
<feature type="binding site" evidence="1">
    <location>
        <position position="53"/>
    </location>
    <ligand>
        <name>S-adenosyl-L-methionine</name>
        <dbReference type="ChEBI" id="CHEBI:59789"/>
    </ligand>
</feature>
<feature type="binding site" evidence="1">
    <location>
        <position position="80"/>
    </location>
    <ligand>
        <name>S-adenosyl-L-methionine</name>
        <dbReference type="ChEBI" id="CHEBI:59789"/>
    </ligand>
</feature>
<feature type="binding site" evidence="1">
    <location>
        <position position="101"/>
    </location>
    <ligand>
        <name>S-adenosyl-L-methionine</name>
        <dbReference type="ChEBI" id="CHEBI:59789"/>
    </ligand>
</feature>
<feature type="binding site" evidence="1">
    <location>
        <position position="108"/>
    </location>
    <ligand>
        <name>S-adenosyl-L-methionine</name>
        <dbReference type="ChEBI" id="CHEBI:59789"/>
    </ligand>
</feature>